<gene>
    <name type="primary">MCM7</name>
    <name type="synonym">PRL</name>
    <name type="ordered locus">At4g02060</name>
    <name type="ORF">AGAA.2</name>
    <name type="ORF">T10M13.7</name>
</gene>
<proteinExistence type="evidence at protein level"/>
<comment type="function">
    <text evidence="1">Probable component of the MCM2-7 complex (MCM complex) that may function as a DNA helicase and which is essential to undergo a single round of replication initiation and elongation per cell cycle in eukaryotic cells (By similarity). Required for megagametophyte and embryo development.</text>
</comment>
<comment type="catalytic activity">
    <reaction>
        <text>ATP + H2O = ADP + phosphate + H(+)</text>
        <dbReference type="Rhea" id="RHEA:13065"/>
        <dbReference type="ChEBI" id="CHEBI:15377"/>
        <dbReference type="ChEBI" id="CHEBI:15378"/>
        <dbReference type="ChEBI" id="CHEBI:30616"/>
        <dbReference type="ChEBI" id="CHEBI:43474"/>
        <dbReference type="ChEBI" id="CHEBI:456216"/>
        <dbReference type="EC" id="3.6.4.12"/>
    </reaction>
</comment>
<comment type="subunit">
    <text evidence="2">Component of the minichromosome maintenance (MCM) complex, a heterotetramer composed of MCM2, MCM3, MCM4, MCM5, MCM6 and MCM7. Interacts with ETG1.</text>
</comment>
<comment type="subcellular location">
    <subcellularLocation>
        <location evidence="4">Nucleus</location>
    </subcellularLocation>
    <subcellularLocation>
        <location evidence="4">Cytoplasm</location>
    </subcellularLocation>
    <text>Localized in the nucleus during G1, S and G2 phases of the cell cycle, and released into the cytoplasmic compartment during mitosis.</text>
</comment>
<comment type="tissue specificity">
    <text evidence="4">Expressed in shoot apex and flower buds.</text>
</comment>
<comment type="developmental stage">
    <text>Accumulates in nucleus during the G1 phase of the cell cycle. During mitosis, the protein rapidly disappears, returning to daughter nuclei during G1.</text>
</comment>
<comment type="induction">
    <text evidence="3">By both rootknot and cyst nematode infections.</text>
</comment>
<comment type="similarity">
    <text evidence="5">Belongs to the MCM family.</text>
</comment>
<sequence length="716" mass="80333">MKDHDFDGDKGLAKGFLENFADANGRSKYMEILQEVSNRKIRAIQVDLDDLFNYKDESEEFLGRLTENTRRYVSIFSAAVDELLPEPTEAFPDDDHDILMTQRADDGTDNPDVSDPHQQIPSEIKRYYEVYFKAPSKGRPSTIREVKASHIGQLVRISGIVTRCSDVKPLMAVAVYTCEDCGHEIYQEVTSRVFMPLFKCPSSRCRLNSKAGNPILQLRASKFLKFQEAKMQELAEHVPKGHIPRSMTVHLRGELTRKVSPGDVVEFSGIFLPIPYTGFKALRAGLVADTYLEATSVTHFKKKYEEYEFQKDEEEQIARLAEDGDIYNKLSRSLAPEIYGHEDIKKALLLLLVGAPHRQLKDGMKIRGDVHICLMGDPGVAKSQLLKHIINVAPRGVYTTGKGSSGVGLTAAVMRDQVTNEMVLEGGALVLADMGICAIDEFDKMDESDRTAIHEVMEQQTVSIAKAGITTSLNARTAVLAAANPAWGRYDLRRTPAENINLPPALLSRFDLLWLILDRADMDSDLELAKHVLHVHQTEESPALGFEPLEPNILRAYISAARRLSPYVPAELEEYIATAYSSIRQEEAKSNTPHSYTTVRTLLSILRISAALARLRFSESVAQSDVDEALRLMQMSKISLYADDRQKAGLDAISDTYSIIRDEAARSKKTHVSYANALNWISRKGYSEAQLKECLEEYAALNVWQIDPHTFDIRFI</sequence>
<accession>P43299</accession>
<accession>O04721</accession>
<feature type="chain" id="PRO_0000194122" description="DNA replication licensing factor MCM7">
    <location>
        <begin position="1"/>
        <end position="716"/>
    </location>
</feature>
<feature type="domain" description="MCM">
    <location>
        <begin position="326"/>
        <end position="531"/>
    </location>
</feature>
<feature type="zinc finger region" description="C4-type" evidence="1">
    <location>
        <begin position="178"/>
        <end position="205"/>
    </location>
</feature>
<feature type="short sequence motif" description="Arginine finger">
    <location>
        <begin position="508"/>
        <end position="511"/>
    </location>
</feature>
<feature type="binding site" evidence="1">
    <location>
        <begin position="376"/>
        <end position="383"/>
    </location>
    <ligand>
        <name>ATP</name>
        <dbReference type="ChEBI" id="CHEBI:30616"/>
    </ligand>
</feature>
<feature type="sequence conflict" description="In Ref. 1; AAC37429." evidence="5" ref="1">
    <original>D</original>
    <variation>E</variation>
    <location>
        <position position="707"/>
    </location>
</feature>
<protein>
    <recommendedName>
        <fullName>DNA replication licensing factor MCM7</fullName>
        <ecNumber>3.6.4.12</ecNumber>
    </recommendedName>
    <alternativeName>
        <fullName>Minichromosome maintenance protein 7</fullName>
        <shortName>AtMCM7</shortName>
    </alternativeName>
    <alternativeName>
        <fullName>Protein PROLIFERA</fullName>
    </alternativeName>
</protein>
<keyword id="KW-0067">ATP-binding</keyword>
<keyword id="KW-0131">Cell cycle</keyword>
<keyword id="KW-0963">Cytoplasm</keyword>
<keyword id="KW-0235">DNA replication</keyword>
<keyword id="KW-0238">DNA-binding</keyword>
<keyword id="KW-0347">Helicase</keyword>
<keyword id="KW-0378">Hydrolase</keyword>
<keyword id="KW-0479">Metal-binding</keyword>
<keyword id="KW-0547">Nucleotide-binding</keyword>
<keyword id="KW-0539">Nucleus</keyword>
<keyword id="KW-1185">Reference proteome</keyword>
<keyword id="KW-0804">Transcription</keyword>
<keyword id="KW-0805">Transcription regulation</keyword>
<keyword id="KW-0862">Zinc</keyword>
<keyword id="KW-0863">Zinc-finger</keyword>
<evidence type="ECO:0000250" key="1"/>
<evidence type="ECO:0000269" key="2">
    <source>
    </source>
</evidence>
<evidence type="ECO:0000269" key="3">
    <source>
    </source>
</evidence>
<evidence type="ECO:0000269" key="4">
    <source>
    </source>
</evidence>
<evidence type="ECO:0000305" key="5"/>
<reference key="1">
    <citation type="journal article" date="1995" name="Science">
        <title>Gene trap tagging of PROLIFERA, an essential MCM2-3-5-like gene in Arabidopsis.</title>
        <authorList>
            <person name="Springer P.S."/>
            <person name="McCombie W.R."/>
            <person name="Sundaresan V."/>
            <person name="Martienssen R.A."/>
        </authorList>
    </citation>
    <scope>NUCLEOTIDE SEQUENCE [MRNA]</scope>
    <source>
        <strain>cv. Landsberg erecta</strain>
    </source>
</reference>
<reference key="2">
    <citation type="submission" date="1997-05" db="EMBL/GenBank/DDBJ databases">
        <authorList>
            <person name="Till S."/>
            <person name="Granat S."/>
            <person name="Parnell L."/>
            <person name="Kaplan N."/>
            <person name="Hoffman J."/>
            <person name="Lodhi M."/>
            <person name="Johnson A.F."/>
            <person name="Dedhia N."/>
            <person name="Martienssen R."/>
            <person name="McCombie W.R."/>
        </authorList>
    </citation>
    <scope>NUCLEOTIDE SEQUENCE [GENOMIC DNA]</scope>
    <source>
        <strain>cv. Landsberg erecta</strain>
    </source>
</reference>
<reference key="3">
    <citation type="journal article" date="1999" name="Nature">
        <title>Sequence and analysis of chromosome 4 of the plant Arabidopsis thaliana.</title>
        <authorList>
            <person name="Mayer K.F.X."/>
            <person name="Schueller C."/>
            <person name="Wambutt R."/>
            <person name="Murphy G."/>
            <person name="Volckaert G."/>
            <person name="Pohl T."/>
            <person name="Duesterhoeft A."/>
            <person name="Stiekema W."/>
            <person name="Entian K.-D."/>
            <person name="Terryn N."/>
            <person name="Harris B."/>
            <person name="Ansorge W."/>
            <person name="Brandt P."/>
            <person name="Grivell L.A."/>
            <person name="Rieger M."/>
            <person name="Weichselgartner M."/>
            <person name="de Simone V."/>
            <person name="Obermaier B."/>
            <person name="Mache R."/>
            <person name="Mueller M."/>
            <person name="Kreis M."/>
            <person name="Delseny M."/>
            <person name="Puigdomenech P."/>
            <person name="Watson M."/>
            <person name="Schmidtheini T."/>
            <person name="Reichert B."/>
            <person name="Portetelle D."/>
            <person name="Perez-Alonso M."/>
            <person name="Boutry M."/>
            <person name="Bancroft I."/>
            <person name="Vos P."/>
            <person name="Hoheisel J."/>
            <person name="Zimmermann W."/>
            <person name="Wedler H."/>
            <person name="Ridley P."/>
            <person name="Langham S.-A."/>
            <person name="McCullagh B."/>
            <person name="Bilham L."/>
            <person name="Robben J."/>
            <person name="van der Schueren J."/>
            <person name="Grymonprez B."/>
            <person name="Chuang Y.-J."/>
            <person name="Vandenbussche F."/>
            <person name="Braeken M."/>
            <person name="Weltjens I."/>
            <person name="Voet M."/>
            <person name="Bastiaens I."/>
            <person name="Aert R."/>
            <person name="Defoor E."/>
            <person name="Weitzenegger T."/>
            <person name="Bothe G."/>
            <person name="Ramsperger U."/>
            <person name="Hilbert H."/>
            <person name="Braun M."/>
            <person name="Holzer E."/>
            <person name="Brandt A."/>
            <person name="Peters S."/>
            <person name="van Staveren M."/>
            <person name="Dirkse W."/>
            <person name="Mooijman P."/>
            <person name="Klein Lankhorst R."/>
            <person name="Rose M."/>
            <person name="Hauf J."/>
            <person name="Koetter P."/>
            <person name="Berneiser S."/>
            <person name="Hempel S."/>
            <person name="Feldpausch M."/>
            <person name="Lamberth S."/>
            <person name="Van den Daele H."/>
            <person name="De Keyser A."/>
            <person name="Buysshaert C."/>
            <person name="Gielen J."/>
            <person name="Villarroel R."/>
            <person name="De Clercq R."/>
            <person name="van Montagu M."/>
            <person name="Rogers J."/>
            <person name="Cronin A."/>
            <person name="Quail M.A."/>
            <person name="Bray-Allen S."/>
            <person name="Clark L."/>
            <person name="Doggett J."/>
            <person name="Hall S."/>
            <person name="Kay M."/>
            <person name="Lennard N."/>
            <person name="McLay K."/>
            <person name="Mayes R."/>
            <person name="Pettett A."/>
            <person name="Rajandream M.A."/>
            <person name="Lyne M."/>
            <person name="Benes V."/>
            <person name="Rechmann S."/>
            <person name="Borkova D."/>
            <person name="Bloecker H."/>
            <person name="Scharfe M."/>
            <person name="Grimm M."/>
            <person name="Loehnert T.-H."/>
            <person name="Dose S."/>
            <person name="de Haan M."/>
            <person name="Maarse A.C."/>
            <person name="Schaefer M."/>
            <person name="Mueller-Auer S."/>
            <person name="Gabel C."/>
            <person name="Fuchs M."/>
            <person name="Fartmann B."/>
            <person name="Granderath K."/>
            <person name="Dauner D."/>
            <person name="Herzl A."/>
            <person name="Neumann S."/>
            <person name="Argiriou A."/>
            <person name="Vitale D."/>
            <person name="Liguori R."/>
            <person name="Piravandi E."/>
            <person name="Massenet O."/>
            <person name="Quigley F."/>
            <person name="Clabauld G."/>
            <person name="Muendlein A."/>
            <person name="Felber R."/>
            <person name="Schnabl S."/>
            <person name="Hiller R."/>
            <person name="Schmidt W."/>
            <person name="Lecharny A."/>
            <person name="Aubourg S."/>
            <person name="Chefdor F."/>
            <person name="Cooke R."/>
            <person name="Berger C."/>
            <person name="Monfort A."/>
            <person name="Casacuberta E."/>
            <person name="Gibbons T."/>
            <person name="Weber N."/>
            <person name="Vandenbol M."/>
            <person name="Bargues M."/>
            <person name="Terol J."/>
            <person name="Torres A."/>
            <person name="Perez-Perez A."/>
            <person name="Purnelle B."/>
            <person name="Bent E."/>
            <person name="Johnson S."/>
            <person name="Tacon D."/>
            <person name="Jesse T."/>
            <person name="Heijnen L."/>
            <person name="Schwarz S."/>
            <person name="Scholler P."/>
            <person name="Heber S."/>
            <person name="Francs P."/>
            <person name="Bielke C."/>
            <person name="Frishman D."/>
            <person name="Haase D."/>
            <person name="Lemcke K."/>
            <person name="Mewes H.-W."/>
            <person name="Stocker S."/>
            <person name="Zaccaria P."/>
            <person name="Bevan M."/>
            <person name="Wilson R.K."/>
            <person name="de la Bastide M."/>
            <person name="Habermann K."/>
            <person name="Parnell L."/>
            <person name="Dedhia N."/>
            <person name="Gnoj L."/>
            <person name="Schutz K."/>
            <person name="Huang E."/>
            <person name="Spiegel L."/>
            <person name="Sekhon M."/>
            <person name="Murray J."/>
            <person name="Sheet P."/>
            <person name="Cordes M."/>
            <person name="Abu-Threideh J."/>
            <person name="Stoneking T."/>
            <person name="Kalicki J."/>
            <person name="Graves T."/>
            <person name="Harmon G."/>
            <person name="Edwards J."/>
            <person name="Latreille P."/>
            <person name="Courtney L."/>
            <person name="Cloud J."/>
            <person name="Abbott A."/>
            <person name="Scott K."/>
            <person name="Johnson D."/>
            <person name="Minx P."/>
            <person name="Bentley D."/>
            <person name="Fulton B."/>
            <person name="Miller N."/>
            <person name="Greco T."/>
            <person name="Kemp K."/>
            <person name="Kramer J."/>
            <person name="Fulton L."/>
            <person name="Mardis E."/>
            <person name="Dante M."/>
            <person name="Pepin K."/>
            <person name="Hillier L.W."/>
            <person name="Nelson J."/>
            <person name="Spieth J."/>
            <person name="Ryan E."/>
            <person name="Andrews S."/>
            <person name="Geisel C."/>
            <person name="Layman D."/>
            <person name="Du H."/>
            <person name="Ali J."/>
            <person name="Berghoff A."/>
            <person name="Jones K."/>
            <person name="Drone K."/>
            <person name="Cotton M."/>
            <person name="Joshu C."/>
            <person name="Antonoiu B."/>
            <person name="Zidanic M."/>
            <person name="Strong C."/>
            <person name="Sun H."/>
            <person name="Lamar B."/>
            <person name="Yordan C."/>
            <person name="Ma P."/>
            <person name="Zhong J."/>
            <person name="Preston R."/>
            <person name="Vil D."/>
            <person name="Shekher M."/>
            <person name="Matero A."/>
            <person name="Shah R."/>
            <person name="Swaby I.K."/>
            <person name="O'Shaughnessy A."/>
            <person name="Rodriguez M."/>
            <person name="Hoffman J."/>
            <person name="Till S."/>
            <person name="Granat S."/>
            <person name="Shohdy N."/>
            <person name="Hasegawa A."/>
            <person name="Hameed A."/>
            <person name="Lodhi M."/>
            <person name="Johnson A."/>
            <person name="Chen E."/>
            <person name="Marra M.A."/>
            <person name="Martienssen R."/>
            <person name="McCombie W.R."/>
        </authorList>
    </citation>
    <scope>NUCLEOTIDE SEQUENCE [LARGE SCALE GENOMIC DNA]</scope>
    <source>
        <strain>cv. Columbia</strain>
    </source>
</reference>
<reference key="4">
    <citation type="journal article" date="2017" name="Plant J.">
        <title>Araport11: a complete reannotation of the Arabidopsis thaliana reference genome.</title>
        <authorList>
            <person name="Cheng C.Y."/>
            <person name="Krishnakumar V."/>
            <person name="Chan A.P."/>
            <person name="Thibaud-Nissen F."/>
            <person name="Schobel S."/>
            <person name="Town C.D."/>
        </authorList>
    </citation>
    <scope>GENOME REANNOTATION</scope>
    <source>
        <strain>cv. Columbia</strain>
    </source>
</reference>
<reference key="5">
    <citation type="journal article" date="2000" name="Development">
        <title>The essential Mcm7 protein PROLIFERA is localized to the nucleus of dividing cells during the G(1) phase and is required maternally for early Arabidopsis development.</title>
        <authorList>
            <person name="Springer P.S."/>
            <person name="Holding D.R."/>
            <person name="Groover A."/>
            <person name="Yordan C."/>
            <person name="Martienssen R.A."/>
        </authorList>
    </citation>
    <scope>CHARACTERIZATION</scope>
</reference>
<reference key="6">
    <citation type="journal article" date="2003" name="Phytopathology">
        <title>Expression of the Arabidopsis MCM gene PROLIFERA during root-knot and cyst nematode infection.</title>
        <authorList>
            <person name="Huang X."/>
            <person name="Springer P.S."/>
            <person name="Kaloshian I."/>
        </authorList>
    </citation>
    <scope>INDUCTION</scope>
</reference>
<reference key="7">
    <citation type="journal article" date="2007" name="Plant Physiol.">
        <title>Genome-wide analysis of the core DNA replication machinery in the higher plants Arabidopsis and rice.</title>
        <authorList>
            <person name="Shultz R.W."/>
            <person name="Tatineni V.M."/>
            <person name="Hanley-Bowdoin L."/>
            <person name="Thompson W.F."/>
        </authorList>
    </citation>
    <scope>GENE FAMILY</scope>
</reference>
<reference key="8">
    <citation type="journal article" date="2008" name="EMBO J.">
        <title>The DNA replication checkpoint aids survival of plants deficient in the novel replisome factor ETG1.</title>
        <authorList>
            <person name="Takahashi N."/>
            <person name="Lammens T."/>
            <person name="Boudolf V."/>
            <person name="Maes S."/>
            <person name="Yoshizumi T."/>
            <person name="De Jaeger G."/>
            <person name="Witters E."/>
            <person name="Inze D."/>
            <person name="De Veylder L."/>
        </authorList>
    </citation>
    <scope>SUBUNIT</scope>
    <scope>INTERACTION WITH ETG1</scope>
</reference>
<reference key="9">
    <citation type="journal article" date="2009" name="Plant Physiol.">
        <title>Dynamic localization of the DNA replication proteins MCM5 and MCM7 in plants.</title>
        <authorList>
            <person name="Shultz R.W."/>
            <person name="Lee T.J."/>
            <person name="Allen G.C."/>
            <person name="Thompson W.F."/>
            <person name="Hanley-Bowdoin L."/>
        </authorList>
    </citation>
    <scope>SUBCELLULAR LOCATION</scope>
    <scope>TISSUE SPECIFICITY</scope>
</reference>
<organism>
    <name type="scientific">Arabidopsis thaliana</name>
    <name type="common">Mouse-ear cress</name>
    <dbReference type="NCBI Taxonomy" id="3702"/>
    <lineage>
        <taxon>Eukaryota</taxon>
        <taxon>Viridiplantae</taxon>
        <taxon>Streptophyta</taxon>
        <taxon>Embryophyta</taxon>
        <taxon>Tracheophyta</taxon>
        <taxon>Spermatophyta</taxon>
        <taxon>Magnoliopsida</taxon>
        <taxon>eudicotyledons</taxon>
        <taxon>Gunneridae</taxon>
        <taxon>Pentapetalae</taxon>
        <taxon>rosids</taxon>
        <taxon>malvids</taxon>
        <taxon>Brassicales</taxon>
        <taxon>Brassicaceae</taxon>
        <taxon>Camelineae</taxon>
        <taxon>Arabidopsis</taxon>
    </lineage>
</organism>
<dbReference type="EC" id="3.6.4.12"/>
<dbReference type="EMBL" id="L39954">
    <property type="protein sequence ID" value="AAC37429.1"/>
    <property type="molecule type" value="mRNA"/>
</dbReference>
<dbReference type="EMBL" id="AF001535">
    <property type="protein sequence ID" value="AAB57797.1"/>
    <property type="molecule type" value="Genomic_DNA"/>
</dbReference>
<dbReference type="EMBL" id="AF001308">
    <property type="protein sequence ID" value="AAC78698.1"/>
    <property type="molecule type" value="Genomic_DNA"/>
</dbReference>
<dbReference type="EMBL" id="AL161493">
    <property type="protein sequence ID" value="CAB80699.1"/>
    <property type="molecule type" value="Genomic_DNA"/>
</dbReference>
<dbReference type="EMBL" id="CP002687">
    <property type="protein sequence ID" value="AEE82117.1"/>
    <property type="molecule type" value="Genomic_DNA"/>
</dbReference>
<dbReference type="EMBL" id="CP002687">
    <property type="protein sequence ID" value="AEE82118.1"/>
    <property type="molecule type" value="Genomic_DNA"/>
</dbReference>
<dbReference type="PIR" id="T01507">
    <property type="entry name" value="T01507"/>
</dbReference>
<dbReference type="RefSeq" id="NP_001190655.1">
    <property type="nucleotide sequence ID" value="NM_001203726.1"/>
</dbReference>
<dbReference type="RefSeq" id="NP_192115.1">
    <property type="nucleotide sequence ID" value="NM_116437.3"/>
</dbReference>
<dbReference type="SMR" id="P43299"/>
<dbReference type="BioGRID" id="13442">
    <property type="interactions" value="9"/>
</dbReference>
<dbReference type="FunCoup" id="P43299">
    <property type="interactions" value="3528"/>
</dbReference>
<dbReference type="IntAct" id="P43299">
    <property type="interactions" value="5"/>
</dbReference>
<dbReference type="MINT" id="P43299"/>
<dbReference type="STRING" id="3702.P43299"/>
<dbReference type="iPTMnet" id="P43299"/>
<dbReference type="PaxDb" id="3702-AT4G02060.2"/>
<dbReference type="ProteomicsDB" id="250828"/>
<dbReference type="EnsemblPlants" id="AT4G02060.1">
    <property type="protein sequence ID" value="AT4G02060.1"/>
    <property type="gene ID" value="AT4G02060"/>
</dbReference>
<dbReference type="EnsemblPlants" id="AT4G02060.2">
    <property type="protein sequence ID" value="AT4G02060.2"/>
    <property type="gene ID" value="AT4G02060"/>
</dbReference>
<dbReference type="GeneID" id="828153"/>
<dbReference type="Gramene" id="AT4G02060.1">
    <property type="protein sequence ID" value="AT4G02060.1"/>
    <property type="gene ID" value="AT4G02060"/>
</dbReference>
<dbReference type="Gramene" id="AT4G02060.2">
    <property type="protein sequence ID" value="AT4G02060.2"/>
    <property type="gene ID" value="AT4G02060"/>
</dbReference>
<dbReference type="KEGG" id="ath:AT4G02060"/>
<dbReference type="Araport" id="AT4G02060"/>
<dbReference type="TAIR" id="AT4G02060">
    <property type="gene designation" value="PRL"/>
</dbReference>
<dbReference type="eggNOG" id="KOG0482">
    <property type="taxonomic scope" value="Eukaryota"/>
</dbReference>
<dbReference type="HOGENOM" id="CLU_000995_7_2_1"/>
<dbReference type="InParanoid" id="P43299"/>
<dbReference type="OMA" id="AQHVTYV"/>
<dbReference type="OrthoDB" id="3207464at2759"/>
<dbReference type="PhylomeDB" id="P43299"/>
<dbReference type="CD-CODE" id="4299E36E">
    <property type="entry name" value="Nucleolus"/>
</dbReference>
<dbReference type="PRO" id="PR:P43299"/>
<dbReference type="Proteomes" id="UP000006548">
    <property type="component" value="Chromosome 4"/>
</dbReference>
<dbReference type="ExpressionAtlas" id="P43299">
    <property type="expression patterns" value="baseline and differential"/>
</dbReference>
<dbReference type="GO" id="GO:0005737">
    <property type="term" value="C:cytoplasm"/>
    <property type="evidence" value="ECO:0000314"/>
    <property type="project" value="TAIR"/>
</dbReference>
<dbReference type="GO" id="GO:0042555">
    <property type="term" value="C:MCM complex"/>
    <property type="evidence" value="ECO:0007669"/>
    <property type="project" value="InterPro"/>
</dbReference>
<dbReference type="GO" id="GO:0005634">
    <property type="term" value="C:nucleus"/>
    <property type="evidence" value="ECO:0000314"/>
    <property type="project" value="TAIR"/>
</dbReference>
<dbReference type="GO" id="GO:0000347">
    <property type="term" value="C:THO complex"/>
    <property type="evidence" value="ECO:0000314"/>
    <property type="project" value="UniProtKB"/>
</dbReference>
<dbReference type="GO" id="GO:0005524">
    <property type="term" value="F:ATP binding"/>
    <property type="evidence" value="ECO:0007669"/>
    <property type="project" value="UniProtKB-KW"/>
</dbReference>
<dbReference type="GO" id="GO:0016887">
    <property type="term" value="F:ATP hydrolysis activity"/>
    <property type="evidence" value="ECO:0007669"/>
    <property type="project" value="RHEA"/>
</dbReference>
<dbReference type="GO" id="GO:0003677">
    <property type="term" value="F:DNA binding"/>
    <property type="evidence" value="ECO:0007669"/>
    <property type="project" value="UniProtKB-KW"/>
</dbReference>
<dbReference type="GO" id="GO:0003678">
    <property type="term" value="F:DNA helicase activity"/>
    <property type="evidence" value="ECO:0007669"/>
    <property type="project" value="InterPro"/>
</dbReference>
<dbReference type="GO" id="GO:0008270">
    <property type="term" value="F:zinc ion binding"/>
    <property type="evidence" value="ECO:0007669"/>
    <property type="project" value="UniProtKB-KW"/>
</dbReference>
<dbReference type="GO" id="GO:0006270">
    <property type="term" value="P:DNA replication initiation"/>
    <property type="evidence" value="ECO:0007669"/>
    <property type="project" value="InterPro"/>
</dbReference>
<dbReference type="GO" id="GO:0009555">
    <property type="term" value="P:pollen development"/>
    <property type="evidence" value="ECO:0000315"/>
    <property type="project" value="TAIR"/>
</dbReference>
<dbReference type="GO" id="GO:0090329">
    <property type="term" value="P:regulation of DNA-templated DNA replication"/>
    <property type="evidence" value="ECO:0000353"/>
    <property type="project" value="TAIR"/>
</dbReference>
<dbReference type="GO" id="GO:0010182">
    <property type="term" value="P:sugar mediated signaling pathway"/>
    <property type="evidence" value="ECO:0000304"/>
    <property type="project" value="TAIR"/>
</dbReference>
<dbReference type="CDD" id="cd17758">
    <property type="entry name" value="MCM7"/>
    <property type="match status" value="1"/>
</dbReference>
<dbReference type="FunFam" id="2.20.28.10:FF:000004">
    <property type="entry name" value="DNA replication licensing factor MCM7"/>
    <property type="match status" value="1"/>
</dbReference>
<dbReference type="FunFam" id="3.40.50.300:FF:000835">
    <property type="entry name" value="DNA replication licensing factor MCM7"/>
    <property type="match status" value="1"/>
</dbReference>
<dbReference type="Gene3D" id="2.20.28.10">
    <property type="match status" value="1"/>
</dbReference>
<dbReference type="Gene3D" id="3.30.1640.10">
    <property type="entry name" value="mini-chromosome maintenance (MCM) complex, chain A, domain 1"/>
    <property type="match status" value="1"/>
</dbReference>
<dbReference type="Gene3D" id="2.40.50.140">
    <property type="entry name" value="Nucleic acid-binding proteins"/>
    <property type="match status" value="1"/>
</dbReference>
<dbReference type="Gene3D" id="3.40.50.300">
    <property type="entry name" value="P-loop containing nucleotide triphosphate hydrolases"/>
    <property type="match status" value="1"/>
</dbReference>
<dbReference type="InterPro" id="IPR031327">
    <property type="entry name" value="MCM"/>
</dbReference>
<dbReference type="InterPro" id="IPR008050">
    <property type="entry name" value="MCM7"/>
</dbReference>
<dbReference type="InterPro" id="IPR018525">
    <property type="entry name" value="MCM_CS"/>
</dbReference>
<dbReference type="InterPro" id="IPR001208">
    <property type="entry name" value="MCM_dom"/>
</dbReference>
<dbReference type="InterPro" id="IPR041562">
    <property type="entry name" value="MCM_lid"/>
</dbReference>
<dbReference type="InterPro" id="IPR027925">
    <property type="entry name" value="MCM_N"/>
</dbReference>
<dbReference type="InterPro" id="IPR033762">
    <property type="entry name" value="MCM_OB"/>
</dbReference>
<dbReference type="InterPro" id="IPR012340">
    <property type="entry name" value="NA-bd_OB-fold"/>
</dbReference>
<dbReference type="InterPro" id="IPR027417">
    <property type="entry name" value="P-loop_NTPase"/>
</dbReference>
<dbReference type="PANTHER" id="PTHR11630">
    <property type="entry name" value="DNA REPLICATION LICENSING FACTOR MCM FAMILY MEMBER"/>
    <property type="match status" value="1"/>
</dbReference>
<dbReference type="PANTHER" id="PTHR11630:SF26">
    <property type="entry name" value="DNA REPLICATION LICENSING FACTOR MCM7"/>
    <property type="match status" value="1"/>
</dbReference>
<dbReference type="Pfam" id="PF00493">
    <property type="entry name" value="MCM"/>
    <property type="match status" value="1"/>
</dbReference>
<dbReference type="Pfam" id="PF17855">
    <property type="entry name" value="MCM_lid"/>
    <property type="match status" value="1"/>
</dbReference>
<dbReference type="Pfam" id="PF14551">
    <property type="entry name" value="MCM_N"/>
    <property type="match status" value="1"/>
</dbReference>
<dbReference type="Pfam" id="PF17207">
    <property type="entry name" value="MCM_OB"/>
    <property type="match status" value="1"/>
</dbReference>
<dbReference type="PRINTS" id="PR01657">
    <property type="entry name" value="MCMFAMILY"/>
</dbReference>
<dbReference type="PRINTS" id="PR01663">
    <property type="entry name" value="MCMPROTEIN7"/>
</dbReference>
<dbReference type="SMART" id="SM00350">
    <property type="entry name" value="MCM"/>
    <property type="match status" value="1"/>
</dbReference>
<dbReference type="SUPFAM" id="SSF50249">
    <property type="entry name" value="Nucleic acid-binding proteins"/>
    <property type="match status" value="1"/>
</dbReference>
<dbReference type="SUPFAM" id="SSF52540">
    <property type="entry name" value="P-loop containing nucleoside triphosphate hydrolases"/>
    <property type="match status" value="1"/>
</dbReference>
<dbReference type="PROSITE" id="PS00847">
    <property type="entry name" value="MCM_1"/>
    <property type="match status" value="1"/>
</dbReference>
<dbReference type="PROSITE" id="PS50051">
    <property type="entry name" value="MCM_2"/>
    <property type="match status" value="1"/>
</dbReference>
<name>MCM7_ARATH</name>